<dbReference type="EMBL" id="AE014299">
    <property type="protein sequence ID" value="AAN57174.1"/>
    <property type="molecule type" value="Genomic_DNA"/>
</dbReference>
<dbReference type="RefSeq" id="NP_719730.1">
    <property type="nucleotide sequence ID" value="NC_004347.2"/>
</dbReference>
<dbReference type="RefSeq" id="WP_011073885.1">
    <property type="nucleotide sequence ID" value="NC_004347.2"/>
</dbReference>
<dbReference type="SMR" id="Q8E9R4"/>
<dbReference type="STRING" id="211586.SO_4202"/>
<dbReference type="PaxDb" id="211586-SO_4202"/>
<dbReference type="KEGG" id="son:SO_4202"/>
<dbReference type="PATRIC" id="fig|211586.12.peg.4058"/>
<dbReference type="eggNOG" id="COG1826">
    <property type="taxonomic scope" value="Bacteria"/>
</dbReference>
<dbReference type="HOGENOM" id="CLU_086034_5_1_6"/>
<dbReference type="PhylomeDB" id="Q8E9R4"/>
<dbReference type="BioCyc" id="SONE211586:G1GMP-3875-MONOMER"/>
<dbReference type="Proteomes" id="UP000008186">
    <property type="component" value="Chromosome"/>
</dbReference>
<dbReference type="GO" id="GO:0033281">
    <property type="term" value="C:TAT protein transport complex"/>
    <property type="evidence" value="ECO:0007669"/>
    <property type="project" value="UniProtKB-UniRule"/>
</dbReference>
<dbReference type="GO" id="GO:0008320">
    <property type="term" value="F:protein transmembrane transporter activity"/>
    <property type="evidence" value="ECO:0007669"/>
    <property type="project" value="UniProtKB-UniRule"/>
</dbReference>
<dbReference type="GO" id="GO:0043953">
    <property type="term" value="P:protein transport by the Tat complex"/>
    <property type="evidence" value="ECO:0007669"/>
    <property type="project" value="UniProtKB-UniRule"/>
</dbReference>
<dbReference type="Gene3D" id="1.20.5.3310">
    <property type="match status" value="1"/>
</dbReference>
<dbReference type="HAMAP" id="MF_00236">
    <property type="entry name" value="TatA_E"/>
    <property type="match status" value="1"/>
</dbReference>
<dbReference type="InterPro" id="IPR003369">
    <property type="entry name" value="TatA/B/E"/>
</dbReference>
<dbReference type="InterPro" id="IPR006312">
    <property type="entry name" value="TatA/E"/>
</dbReference>
<dbReference type="NCBIfam" id="NF002813">
    <property type="entry name" value="PRK02958.1"/>
    <property type="match status" value="1"/>
</dbReference>
<dbReference type="NCBIfam" id="TIGR01411">
    <property type="entry name" value="tatAE"/>
    <property type="match status" value="1"/>
</dbReference>
<dbReference type="PANTHER" id="PTHR42982">
    <property type="entry name" value="SEC-INDEPENDENT PROTEIN TRANSLOCASE PROTEIN TATA"/>
    <property type="match status" value="1"/>
</dbReference>
<dbReference type="PANTHER" id="PTHR42982:SF1">
    <property type="entry name" value="SEC-INDEPENDENT PROTEIN TRANSLOCASE PROTEIN TATA"/>
    <property type="match status" value="1"/>
</dbReference>
<dbReference type="Pfam" id="PF02416">
    <property type="entry name" value="TatA_B_E"/>
    <property type="match status" value="1"/>
</dbReference>
<reference key="1">
    <citation type="journal article" date="2002" name="Nat. Biotechnol.">
        <title>Genome sequence of the dissimilatory metal ion-reducing bacterium Shewanella oneidensis.</title>
        <authorList>
            <person name="Heidelberg J.F."/>
            <person name="Paulsen I.T."/>
            <person name="Nelson K.E."/>
            <person name="Gaidos E.J."/>
            <person name="Nelson W.C."/>
            <person name="Read T.D."/>
            <person name="Eisen J.A."/>
            <person name="Seshadri R."/>
            <person name="Ward N.L."/>
            <person name="Methe B.A."/>
            <person name="Clayton R.A."/>
            <person name="Meyer T."/>
            <person name="Tsapin A."/>
            <person name="Scott J."/>
            <person name="Beanan M.J."/>
            <person name="Brinkac L.M."/>
            <person name="Daugherty S.C."/>
            <person name="DeBoy R.T."/>
            <person name="Dodson R.J."/>
            <person name="Durkin A.S."/>
            <person name="Haft D.H."/>
            <person name="Kolonay J.F."/>
            <person name="Madupu R."/>
            <person name="Peterson J.D."/>
            <person name="Umayam L.A."/>
            <person name="White O."/>
            <person name="Wolf A.M."/>
            <person name="Vamathevan J.J."/>
            <person name="Weidman J.F."/>
            <person name="Impraim M."/>
            <person name="Lee K."/>
            <person name="Berry K.J."/>
            <person name="Lee C."/>
            <person name="Mueller J."/>
            <person name="Khouri H.M."/>
            <person name="Gill J."/>
            <person name="Utterback T.R."/>
            <person name="McDonald L.A."/>
            <person name="Feldblyum T.V."/>
            <person name="Smith H.O."/>
            <person name="Venter J.C."/>
            <person name="Nealson K.H."/>
            <person name="Fraser C.M."/>
        </authorList>
    </citation>
    <scope>NUCLEOTIDE SEQUENCE [LARGE SCALE GENOMIC DNA]</scope>
    <source>
        <strain>ATCC 700550 / JCM 31522 / CIP 106686 / LMG 19005 / NCIMB 14063 / MR-1</strain>
    </source>
</reference>
<protein>
    <recommendedName>
        <fullName evidence="1">Sec-independent protein translocase protein TatA</fullName>
    </recommendedName>
</protein>
<proteinExistence type="inferred from homology"/>
<comment type="function">
    <text evidence="1">Part of the twin-arginine translocation (Tat) system that transports large folded proteins containing a characteristic twin-arginine motif in their signal peptide across membranes. TatA could form the protein-conducting channel of the Tat system.</text>
</comment>
<comment type="subunit">
    <text evidence="1">The Tat system comprises two distinct complexes: a TatABC complex, containing multiple copies of TatA, TatB and TatC subunits, and a separate TatA complex, containing only TatA subunits. Substrates initially bind to the TatABC complex, which probably triggers association of the separate TatA complex to form the active translocon.</text>
</comment>
<comment type="subcellular location">
    <subcellularLocation>
        <location evidence="1">Cell inner membrane</location>
        <topology evidence="1">Single-pass membrane protein</topology>
    </subcellularLocation>
</comment>
<comment type="similarity">
    <text evidence="1">Belongs to the TatA/E family.</text>
</comment>
<gene>
    <name evidence="1" type="primary">tatA</name>
    <name type="ordered locus">SO_4202</name>
</gene>
<feature type="chain" id="PRO_1000044443" description="Sec-independent protein translocase protein TatA">
    <location>
        <begin position="1"/>
        <end position="88"/>
    </location>
</feature>
<feature type="transmembrane region" description="Helical" evidence="1">
    <location>
        <begin position="1"/>
        <end position="21"/>
    </location>
</feature>
<feature type="region of interest" description="Disordered" evidence="2">
    <location>
        <begin position="43"/>
        <end position="88"/>
    </location>
</feature>
<feature type="compositionally biased region" description="Basic and acidic residues" evidence="2">
    <location>
        <begin position="46"/>
        <end position="57"/>
    </location>
</feature>
<feature type="compositionally biased region" description="Polar residues" evidence="2">
    <location>
        <begin position="62"/>
        <end position="76"/>
    </location>
</feature>
<feature type="compositionally biased region" description="Basic and acidic residues" evidence="2">
    <location>
        <begin position="77"/>
        <end position="88"/>
    </location>
</feature>
<name>TATA_SHEON</name>
<evidence type="ECO:0000255" key="1">
    <source>
        <dbReference type="HAMAP-Rule" id="MF_00236"/>
    </source>
</evidence>
<evidence type="ECO:0000256" key="2">
    <source>
        <dbReference type="SAM" id="MobiDB-lite"/>
    </source>
</evidence>
<accession>Q8E9R4</accession>
<keyword id="KW-0997">Cell inner membrane</keyword>
<keyword id="KW-1003">Cell membrane</keyword>
<keyword id="KW-0472">Membrane</keyword>
<keyword id="KW-0653">Protein transport</keyword>
<keyword id="KW-1185">Reference proteome</keyword>
<keyword id="KW-0811">Translocation</keyword>
<keyword id="KW-0812">Transmembrane</keyword>
<keyword id="KW-1133">Transmembrane helix</keyword>
<keyword id="KW-0813">Transport</keyword>
<sequence length="88" mass="9339">MGGISIWQLLIIALIVVLLFGTKKLRSLGGDLGGAVKGFKNAMSSEEDKKALEDAEAAKPVQTAQTVQSAQPTQQATEKKPESNKEQA</sequence>
<organism>
    <name type="scientific">Shewanella oneidensis (strain ATCC 700550 / JCM 31522 / CIP 106686 / LMG 19005 / NCIMB 14063 / MR-1)</name>
    <dbReference type="NCBI Taxonomy" id="211586"/>
    <lineage>
        <taxon>Bacteria</taxon>
        <taxon>Pseudomonadati</taxon>
        <taxon>Pseudomonadota</taxon>
        <taxon>Gammaproteobacteria</taxon>
        <taxon>Alteromonadales</taxon>
        <taxon>Shewanellaceae</taxon>
        <taxon>Shewanella</taxon>
    </lineage>
</organism>